<name>CR32_RANCA</name>
<reference key="1">
    <citation type="journal article" date="1993" name="J. Chem. Res.">
        <title>Peptides from Australian frogs. The structures of the caerins from Litoria caerula.</title>
        <authorList>
            <person name="Stone D.J.M."/>
            <person name="Waugh R.J."/>
            <person name="Bowie J.H."/>
            <person name="Wallace J.C."/>
            <person name="Tyler M.J."/>
        </authorList>
    </citation>
    <scope>PROTEIN SEQUENCE</scope>
    <scope>AMIDATION AT LYS-22</scope>
    <scope>MASS SPECTROMETRY</scope>
    <source>
        <tissue>Parotoid gland</tissue>
    </source>
</reference>
<proteinExistence type="evidence at protein level"/>
<evidence type="ECO:0000269" key="1">
    <source ref="1"/>
</evidence>
<evidence type="ECO:0000305" key="2"/>
<feature type="peptide" id="PRO_0000043749" description="Caerin-3.2">
    <location>
        <begin position="1"/>
        <end position="22"/>
    </location>
</feature>
<feature type="modified residue" description="Lysine amide" evidence="1">
    <location>
        <position position="22"/>
    </location>
</feature>
<organism>
    <name type="scientific">Ranoidea caerulea</name>
    <name type="common">Green tree frog</name>
    <name type="synonym">Litoria caerulea</name>
    <dbReference type="NCBI Taxonomy" id="30344"/>
    <lineage>
        <taxon>Eukaryota</taxon>
        <taxon>Metazoa</taxon>
        <taxon>Chordata</taxon>
        <taxon>Craniata</taxon>
        <taxon>Vertebrata</taxon>
        <taxon>Euteleostomi</taxon>
        <taxon>Amphibia</taxon>
        <taxon>Batrachia</taxon>
        <taxon>Anura</taxon>
        <taxon>Neobatrachia</taxon>
        <taxon>Hyloidea</taxon>
        <taxon>Hylidae</taxon>
        <taxon>Pelodryadinae</taxon>
        <taxon>Ranoidea</taxon>
    </lineage>
</organism>
<accession>P56239</accession>
<sequence>GLWEKIKEKASELVSGIVEGVK</sequence>
<protein>
    <recommendedName>
        <fullName>Caerin-3.2</fullName>
    </recommendedName>
</protein>
<dbReference type="GO" id="GO:0005576">
    <property type="term" value="C:extracellular region"/>
    <property type="evidence" value="ECO:0007669"/>
    <property type="project" value="UniProtKB-SubCell"/>
</dbReference>
<dbReference type="GO" id="GO:0042742">
    <property type="term" value="P:defense response to bacterium"/>
    <property type="evidence" value="ECO:0007669"/>
    <property type="project" value="UniProtKB-KW"/>
</dbReference>
<keyword id="KW-0027">Amidation</keyword>
<keyword id="KW-0878">Amphibian defense peptide</keyword>
<keyword id="KW-0044">Antibiotic</keyword>
<keyword id="KW-0929">Antimicrobial</keyword>
<keyword id="KW-0903">Direct protein sequencing</keyword>
<keyword id="KW-0964">Secreted</keyword>
<comment type="function">
    <text>Antibacterial peptide, that adopts an alpha helical conformation which can disrupt bacterial membranes. Each caerin displays a different antimicrobial specificity.</text>
</comment>
<comment type="subcellular location">
    <subcellularLocation>
        <location>Secreted</location>
    </subcellularLocation>
</comment>
<comment type="tissue specificity">
    <text>Expressed by the skin parotoid and/or rostral glands.</text>
</comment>
<comment type="mass spectrometry"/>
<comment type="similarity">
    <text evidence="2">Belongs to the frog skin active peptide (FSAP) family. Caerin subfamily.</text>
</comment>